<feature type="chain" id="PRO_0000064502" description="Antigen H4">
    <location>
        <begin position="1" status="less than"/>
        <end position="96"/>
    </location>
</feature>
<feature type="region of interest" description="Disordered" evidence="2">
    <location>
        <begin position="1"/>
        <end position="20"/>
    </location>
</feature>
<feature type="glycosylation site" description="N-linked (GlcNAc...) asparagine" evidence="1">
    <location>
        <position position="34"/>
    </location>
</feature>
<feature type="non-terminal residue">
    <location>
        <position position="1"/>
    </location>
</feature>
<protein>
    <recommendedName>
        <fullName>Antigen H4</fullName>
    </recommendedName>
</protein>
<dbReference type="EMBL" id="M57302">
    <property type="protein sequence ID" value="AAA30139.1"/>
    <property type="molecule type" value="mRNA"/>
</dbReference>
<dbReference type="PIR" id="PS0423">
    <property type="entry name" value="PS0423"/>
</dbReference>
<dbReference type="SMR" id="Q27001"/>
<dbReference type="GlyCosmos" id="Q27001">
    <property type="glycosylation" value="1 site, No reported glycans"/>
</dbReference>
<dbReference type="VEuPathDB" id="ToxoDB:TGARI_277080"/>
<dbReference type="VEuPathDB" id="ToxoDB:TGCAST_277080"/>
<dbReference type="VEuPathDB" id="ToxoDB:TGCOUG_277080"/>
<dbReference type="VEuPathDB" id="ToxoDB:TGDOM2_277080"/>
<dbReference type="VEuPathDB" id="ToxoDB:TGFOU_277080"/>
<dbReference type="VEuPathDB" id="ToxoDB:TGGT1_277080"/>
<dbReference type="VEuPathDB" id="ToxoDB:TGMAS_277080"/>
<dbReference type="VEuPathDB" id="ToxoDB:TGME49_277080"/>
<dbReference type="VEuPathDB" id="ToxoDB:TGP89_277080"/>
<dbReference type="VEuPathDB" id="ToxoDB:TGPRC2_277080"/>
<dbReference type="VEuPathDB" id="ToxoDB:TGRH88_066240"/>
<dbReference type="VEuPathDB" id="ToxoDB:TGRUB_277080"/>
<dbReference type="VEuPathDB" id="ToxoDB:TGVAND_277080"/>
<dbReference type="VEuPathDB" id="ToxoDB:TGVEG_277080"/>
<dbReference type="Gene3D" id="3.30.70.2380">
    <property type="match status" value="1"/>
</dbReference>
<dbReference type="InterPro" id="IPR049098">
    <property type="entry name" value="MIC5-like"/>
</dbReference>
<dbReference type="Pfam" id="PF21496">
    <property type="entry name" value="MIC5"/>
    <property type="match status" value="1"/>
</dbReference>
<accession>Q27001</accession>
<keyword id="KW-0325">Glycoprotein</keyword>
<evidence type="ECO:0000255" key="1"/>
<evidence type="ECO:0000256" key="2">
    <source>
        <dbReference type="SAM" id="MobiDB-lite"/>
    </source>
</evidence>
<proteinExistence type="evidence at transcript level"/>
<sequence>EFQEEIKEGVEEHKHEDDPEMTRLMVTEKQESKNFSKMAKSQSFSTRIEELGGSISFLTETGVTMIELPKTASEHDMDQLLHDILAAVESLGSTPR</sequence>
<name>AH4_TOXGO</name>
<gene>
    <name type="primary">H4</name>
</gene>
<organism>
    <name type="scientific">Toxoplasma gondii</name>
    <dbReference type="NCBI Taxonomy" id="5811"/>
    <lineage>
        <taxon>Eukaryota</taxon>
        <taxon>Sar</taxon>
        <taxon>Alveolata</taxon>
        <taxon>Apicomplexa</taxon>
        <taxon>Conoidasida</taxon>
        <taxon>Coccidia</taxon>
        <taxon>Eucoccidiorida</taxon>
        <taxon>Eimeriorina</taxon>
        <taxon>Sarcocystidae</taxon>
        <taxon>Toxoplasma</taxon>
    </lineage>
</organism>
<reference key="1">
    <citation type="journal article" date="1991" name="Gene">
        <title>Cloning of Toxoplasma gondii gene fragments encoding diagnostic antigens.</title>
        <authorList>
            <person name="Johnson A.M."/>
            <person name="Illana S."/>
        </authorList>
    </citation>
    <scope>NUCLEOTIDE SEQUENCE [MRNA]</scope>
    <source>
        <strain>RH</strain>
    </source>
</reference>